<name>RL13_BACCQ</name>
<dbReference type="EMBL" id="CP000227">
    <property type="protein sequence ID" value="ACM10671.1"/>
    <property type="molecule type" value="Genomic_DNA"/>
</dbReference>
<dbReference type="SMR" id="B9IZM7"/>
<dbReference type="KEGG" id="bcq:BCQ_0156"/>
<dbReference type="HOGENOM" id="CLU_082184_2_2_9"/>
<dbReference type="Proteomes" id="UP000000441">
    <property type="component" value="Chromosome"/>
</dbReference>
<dbReference type="GO" id="GO:0022625">
    <property type="term" value="C:cytosolic large ribosomal subunit"/>
    <property type="evidence" value="ECO:0007669"/>
    <property type="project" value="TreeGrafter"/>
</dbReference>
<dbReference type="GO" id="GO:0003729">
    <property type="term" value="F:mRNA binding"/>
    <property type="evidence" value="ECO:0007669"/>
    <property type="project" value="TreeGrafter"/>
</dbReference>
<dbReference type="GO" id="GO:0003735">
    <property type="term" value="F:structural constituent of ribosome"/>
    <property type="evidence" value="ECO:0007669"/>
    <property type="project" value="InterPro"/>
</dbReference>
<dbReference type="GO" id="GO:0017148">
    <property type="term" value="P:negative regulation of translation"/>
    <property type="evidence" value="ECO:0007669"/>
    <property type="project" value="TreeGrafter"/>
</dbReference>
<dbReference type="GO" id="GO:0006412">
    <property type="term" value="P:translation"/>
    <property type="evidence" value="ECO:0007669"/>
    <property type="project" value="UniProtKB-UniRule"/>
</dbReference>
<dbReference type="CDD" id="cd00392">
    <property type="entry name" value="Ribosomal_L13"/>
    <property type="match status" value="1"/>
</dbReference>
<dbReference type="FunFam" id="3.90.1180.10:FF:000001">
    <property type="entry name" value="50S ribosomal protein L13"/>
    <property type="match status" value="1"/>
</dbReference>
<dbReference type="Gene3D" id="3.90.1180.10">
    <property type="entry name" value="Ribosomal protein L13"/>
    <property type="match status" value="1"/>
</dbReference>
<dbReference type="HAMAP" id="MF_01366">
    <property type="entry name" value="Ribosomal_uL13"/>
    <property type="match status" value="1"/>
</dbReference>
<dbReference type="InterPro" id="IPR005822">
    <property type="entry name" value="Ribosomal_uL13"/>
</dbReference>
<dbReference type="InterPro" id="IPR005823">
    <property type="entry name" value="Ribosomal_uL13_bac-type"/>
</dbReference>
<dbReference type="InterPro" id="IPR023563">
    <property type="entry name" value="Ribosomal_uL13_CS"/>
</dbReference>
<dbReference type="InterPro" id="IPR036899">
    <property type="entry name" value="Ribosomal_uL13_sf"/>
</dbReference>
<dbReference type="NCBIfam" id="TIGR01066">
    <property type="entry name" value="rplM_bact"/>
    <property type="match status" value="1"/>
</dbReference>
<dbReference type="PANTHER" id="PTHR11545:SF2">
    <property type="entry name" value="LARGE RIBOSOMAL SUBUNIT PROTEIN UL13M"/>
    <property type="match status" value="1"/>
</dbReference>
<dbReference type="PANTHER" id="PTHR11545">
    <property type="entry name" value="RIBOSOMAL PROTEIN L13"/>
    <property type="match status" value="1"/>
</dbReference>
<dbReference type="Pfam" id="PF00572">
    <property type="entry name" value="Ribosomal_L13"/>
    <property type="match status" value="1"/>
</dbReference>
<dbReference type="PIRSF" id="PIRSF002181">
    <property type="entry name" value="Ribosomal_L13"/>
    <property type="match status" value="1"/>
</dbReference>
<dbReference type="SUPFAM" id="SSF52161">
    <property type="entry name" value="Ribosomal protein L13"/>
    <property type="match status" value="1"/>
</dbReference>
<dbReference type="PROSITE" id="PS00783">
    <property type="entry name" value="RIBOSOMAL_L13"/>
    <property type="match status" value="1"/>
</dbReference>
<protein>
    <recommendedName>
        <fullName evidence="1">Large ribosomal subunit protein uL13</fullName>
    </recommendedName>
    <alternativeName>
        <fullName evidence="2">50S ribosomal protein L13</fullName>
    </alternativeName>
</protein>
<sequence length="145" mass="16428">MRTTFMAKANEVERKWYVVDAEGQTLGRLASEVASILRGKNKPTFTPHVDTGDHVIIINAEKIHLTGNKLNDKIYYRHTNHPGGLKQRTALEMRTNYPVQMLELAIKGMLPKGRLGRQVSKKLNVYAGAEHPHQAQKPEVYELRG</sequence>
<feature type="chain" id="PRO_1000166850" description="Large ribosomal subunit protein uL13">
    <location>
        <begin position="1"/>
        <end position="145"/>
    </location>
</feature>
<keyword id="KW-0687">Ribonucleoprotein</keyword>
<keyword id="KW-0689">Ribosomal protein</keyword>
<organism>
    <name type="scientific">Bacillus cereus (strain Q1)</name>
    <dbReference type="NCBI Taxonomy" id="361100"/>
    <lineage>
        <taxon>Bacteria</taxon>
        <taxon>Bacillati</taxon>
        <taxon>Bacillota</taxon>
        <taxon>Bacilli</taxon>
        <taxon>Bacillales</taxon>
        <taxon>Bacillaceae</taxon>
        <taxon>Bacillus</taxon>
        <taxon>Bacillus cereus group</taxon>
    </lineage>
</organism>
<gene>
    <name evidence="1" type="primary">rplM</name>
    <name type="ordered locus">BCQ_0156</name>
</gene>
<proteinExistence type="inferred from homology"/>
<comment type="function">
    <text evidence="1">This protein is one of the early assembly proteins of the 50S ribosomal subunit, although it is not seen to bind rRNA by itself. It is important during the early stages of 50S assembly.</text>
</comment>
<comment type="subunit">
    <text evidence="1">Part of the 50S ribosomal subunit.</text>
</comment>
<comment type="similarity">
    <text evidence="1">Belongs to the universal ribosomal protein uL13 family.</text>
</comment>
<evidence type="ECO:0000255" key="1">
    <source>
        <dbReference type="HAMAP-Rule" id="MF_01366"/>
    </source>
</evidence>
<evidence type="ECO:0000305" key="2"/>
<reference key="1">
    <citation type="journal article" date="2009" name="J. Bacteriol.">
        <title>Complete genome sequence of the extremophilic Bacillus cereus strain Q1 with industrial applications.</title>
        <authorList>
            <person name="Xiong Z."/>
            <person name="Jiang Y."/>
            <person name="Qi D."/>
            <person name="Lu H."/>
            <person name="Yang F."/>
            <person name="Yang J."/>
            <person name="Chen L."/>
            <person name="Sun L."/>
            <person name="Xu X."/>
            <person name="Xue Y."/>
            <person name="Zhu Y."/>
            <person name="Jin Q."/>
        </authorList>
    </citation>
    <scope>NUCLEOTIDE SEQUENCE [LARGE SCALE GENOMIC DNA]</scope>
    <source>
        <strain>Q1</strain>
    </source>
</reference>
<accession>B9IZM7</accession>